<reference key="1">
    <citation type="submission" date="2007-06" db="EMBL/GenBank/DDBJ databases">
        <authorList>
            <consortium name="NIH - Mammalian Gene Collection (MGC) project"/>
        </authorList>
    </citation>
    <scope>NUCLEOTIDE SEQUENCE [LARGE SCALE MRNA]</scope>
    <source>
        <strain>Hereford</strain>
        <tissue>Fetal cerebellum</tissue>
    </source>
</reference>
<reference key="2">
    <citation type="journal article" date="1992" name="J. Biol. Chem.">
        <title>Neurocalcin: a novel calcium-binding protein from bovine brain.</title>
        <authorList>
            <person name="Terasawa M."/>
            <person name="Nakano A."/>
            <person name="Kobayashi R."/>
            <person name="Hidaka H."/>
        </authorList>
    </citation>
    <scope>PROTEIN SEQUENCE OF 8-31; 49-63; 103-130 AND 164-170</scope>
    <source>
        <tissue>Brain</tissue>
    </source>
</reference>
<keyword id="KW-0106">Calcium</keyword>
<keyword id="KW-0903">Direct protein sequencing</keyword>
<keyword id="KW-0449">Lipoprotein</keyword>
<keyword id="KW-0472">Membrane</keyword>
<keyword id="KW-0479">Metal-binding</keyword>
<keyword id="KW-0519">Myristate</keyword>
<keyword id="KW-1185">Reference proteome</keyword>
<keyword id="KW-0677">Repeat</keyword>
<comment type="function">
    <text>May be involved in the calcium-dependent regulation of rhodopsin phosphorylation.</text>
</comment>
<comment type="subcellular location">
    <subcellularLocation>
        <location evidence="1">Membrane</location>
        <topology evidence="1">Lipid-anchor</topology>
    </subcellularLocation>
</comment>
<comment type="tissue specificity">
    <text>Brain and retina.</text>
</comment>
<comment type="miscellaneous">
    <text>Five isoprotein forms of neurocalcin are designated alpha, beta, gamma1, gamma2 and delta.</text>
</comment>
<comment type="similarity">
    <text evidence="3">Belongs to the recoverin family.</text>
</comment>
<organism>
    <name type="scientific">Bos taurus</name>
    <name type="common">Bovine</name>
    <dbReference type="NCBI Taxonomy" id="9913"/>
    <lineage>
        <taxon>Eukaryota</taxon>
        <taxon>Metazoa</taxon>
        <taxon>Chordata</taxon>
        <taxon>Craniata</taxon>
        <taxon>Vertebrata</taxon>
        <taxon>Euteleostomi</taxon>
        <taxon>Mammalia</taxon>
        <taxon>Eutheria</taxon>
        <taxon>Laurasiatheria</taxon>
        <taxon>Artiodactyla</taxon>
        <taxon>Ruminantia</taxon>
        <taxon>Pecora</taxon>
        <taxon>Bovidae</taxon>
        <taxon>Bovinae</taxon>
        <taxon>Bos</taxon>
    </lineage>
</organism>
<evidence type="ECO:0000250" key="1">
    <source>
        <dbReference type="UniProtKB" id="P37235"/>
    </source>
</evidence>
<evidence type="ECO:0000255" key="2">
    <source>
        <dbReference type="PROSITE-ProRule" id="PRU00448"/>
    </source>
</evidence>
<evidence type="ECO:0000305" key="3"/>
<proteinExistence type="evidence at protein level"/>
<accession>P29105</accession>
<accession>A5PKL3</accession>
<accession>P29106</accession>
<feature type="initiator methionine" description="Removed" evidence="1">
    <location>
        <position position="1"/>
    </location>
</feature>
<feature type="chain" id="PRO_0000073786" description="Hippocalcin-like protein 1">
    <location>
        <begin position="2"/>
        <end position="193"/>
    </location>
</feature>
<feature type="domain" description="EF-hand 1" evidence="2">
    <location>
        <begin position="41"/>
        <end position="58"/>
    </location>
</feature>
<feature type="domain" description="EF-hand 2" evidence="2">
    <location>
        <begin position="60"/>
        <end position="95"/>
    </location>
</feature>
<feature type="domain" description="EF-hand 3" evidence="2">
    <location>
        <begin position="96"/>
        <end position="131"/>
    </location>
</feature>
<feature type="domain" description="EF-hand 4" evidence="2">
    <location>
        <begin position="144"/>
        <end position="179"/>
    </location>
</feature>
<feature type="binding site" evidence="2">
    <location>
        <position position="73"/>
    </location>
    <ligand>
        <name>Ca(2+)</name>
        <dbReference type="ChEBI" id="CHEBI:29108"/>
        <label>1</label>
    </ligand>
</feature>
<feature type="binding site" evidence="2">
    <location>
        <position position="75"/>
    </location>
    <ligand>
        <name>Ca(2+)</name>
        <dbReference type="ChEBI" id="CHEBI:29108"/>
        <label>1</label>
    </ligand>
</feature>
<feature type="binding site" evidence="2">
    <location>
        <position position="77"/>
    </location>
    <ligand>
        <name>Ca(2+)</name>
        <dbReference type="ChEBI" id="CHEBI:29108"/>
        <label>1</label>
    </ligand>
</feature>
<feature type="binding site" evidence="2">
    <location>
        <position position="79"/>
    </location>
    <ligand>
        <name>Ca(2+)</name>
        <dbReference type="ChEBI" id="CHEBI:29108"/>
        <label>1</label>
    </ligand>
</feature>
<feature type="binding site" evidence="2">
    <location>
        <position position="84"/>
    </location>
    <ligand>
        <name>Ca(2+)</name>
        <dbReference type="ChEBI" id="CHEBI:29108"/>
        <label>1</label>
    </ligand>
</feature>
<feature type="binding site" evidence="2">
    <location>
        <position position="109"/>
    </location>
    <ligand>
        <name>Ca(2+)</name>
        <dbReference type="ChEBI" id="CHEBI:29108"/>
        <label>2</label>
    </ligand>
</feature>
<feature type="binding site" evidence="2">
    <location>
        <position position="111"/>
    </location>
    <ligand>
        <name>Ca(2+)</name>
        <dbReference type="ChEBI" id="CHEBI:29108"/>
        <label>2</label>
    </ligand>
</feature>
<feature type="binding site" evidence="2">
    <location>
        <position position="113"/>
    </location>
    <ligand>
        <name>Ca(2+)</name>
        <dbReference type="ChEBI" id="CHEBI:29108"/>
        <label>2</label>
    </ligand>
</feature>
<feature type="binding site" evidence="2">
    <location>
        <position position="115"/>
    </location>
    <ligand>
        <name>Ca(2+)</name>
        <dbReference type="ChEBI" id="CHEBI:29108"/>
        <label>2</label>
    </ligand>
</feature>
<feature type="binding site" evidence="2">
    <location>
        <position position="120"/>
    </location>
    <ligand>
        <name>Ca(2+)</name>
        <dbReference type="ChEBI" id="CHEBI:29108"/>
        <label>2</label>
    </ligand>
</feature>
<feature type="binding site" evidence="2">
    <location>
        <position position="157"/>
    </location>
    <ligand>
        <name>Ca(2+)</name>
        <dbReference type="ChEBI" id="CHEBI:29108"/>
        <label>3</label>
    </ligand>
</feature>
<feature type="binding site" evidence="2">
    <location>
        <position position="159"/>
    </location>
    <ligand>
        <name>Ca(2+)</name>
        <dbReference type="ChEBI" id="CHEBI:29108"/>
        <label>3</label>
    </ligand>
</feature>
<feature type="binding site" evidence="2">
    <location>
        <position position="161"/>
    </location>
    <ligand>
        <name>Ca(2+)</name>
        <dbReference type="ChEBI" id="CHEBI:29108"/>
        <label>3</label>
    </ligand>
</feature>
<feature type="binding site" evidence="2">
    <location>
        <position position="163"/>
    </location>
    <ligand>
        <name>Ca(2+)</name>
        <dbReference type="ChEBI" id="CHEBI:29108"/>
        <label>3</label>
    </ligand>
</feature>
<feature type="binding site" evidence="2">
    <location>
        <position position="168"/>
    </location>
    <ligand>
        <name>Ca(2+)</name>
        <dbReference type="ChEBI" id="CHEBI:29108"/>
        <label>3</label>
    </ligand>
</feature>
<feature type="lipid moiety-binding region" description="N-myristoyl glycine" evidence="1">
    <location>
        <position position="2"/>
    </location>
</feature>
<feature type="sequence conflict" description="In Ref. 2; AA sequence." evidence="3" ref="2">
    <original>A</original>
    <variation>H</variation>
    <location>
        <position position="61"/>
    </location>
</feature>
<feature type="sequence conflict" description="In Ref. 2; AA sequence." evidence="3" ref="2">
    <original>S</original>
    <variation>A</variation>
    <location>
        <position position="119"/>
    </location>
</feature>
<gene>
    <name type="primary">HPCAL1</name>
</gene>
<protein>
    <recommendedName>
        <fullName>Hippocalcin-like protein 1</fullName>
    </recommendedName>
    <alternativeName>
        <fullName>Neurocalcin-gamma</fullName>
    </alternativeName>
</protein>
<sequence length="193" mass="22285">MGKQNSKLRPEVLQDLRENTEFTDHELQEWYKGFLKDCPTGHLTVDEFKKIYANFFPYGDASKFAEHVFRTFDTNGDGTIDFREFIIALSVTSRGKLEQKLKWAFSMYDLDGNGYISRSEMLEIVQAIYKMVSSVMKMPEDESTPEKRTDKIFRQMDTNNDGKLSLEEFIKGAKSDPSIVRLLQCDPSSASQF</sequence>
<name>HPCL1_BOVIN</name>
<dbReference type="EMBL" id="BC142529">
    <property type="protein sequence ID" value="AAI42530.1"/>
    <property type="molecule type" value="mRNA"/>
</dbReference>
<dbReference type="PIR" id="B44103">
    <property type="entry name" value="B44103"/>
</dbReference>
<dbReference type="PIR" id="E44103">
    <property type="entry name" value="E44103"/>
</dbReference>
<dbReference type="RefSeq" id="NP_001092434.1">
    <property type="nucleotide sequence ID" value="NM_001098964.2"/>
</dbReference>
<dbReference type="RefSeq" id="XP_005213026.1">
    <property type="nucleotide sequence ID" value="XM_005212969.4"/>
</dbReference>
<dbReference type="RefSeq" id="XP_010808503.1">
    <property type="nucleotide sequence ID" value="XM_010810201.4"/>
</dbReference>
<dbReference type="RefSeq" id="XP_010808504.1">
    <property type="nucleotide sequence ID" value="XM_010810202.2"/>
</dbReference>
<dbReference type="RefSeq" id="XP_015329023.1">
    <property type="nucleotide sequence ID" value="XM_015473537.3"/>
</dbReference>
<dbReference type="RefSeq" id="XP_059747175.1">
    <property type="nucleotide sequence ID" value="XM_059891192.1"/>
</dbReference>
<dbReference type="SMR" id="P29105"/>
<dbReference type="FunCoup" id="P29105">
    <property type="interactions" value="1526"/>
</dbReference>
<dbReference type="STRING" id="9913.ENSBTAP00000063147"/>
<dbReference type="PaxDb" id="9913-ENSBTAP00000005577"/>
<dbReference type="Ensembl" id="ENSBTAT00000005577.4">
    <property type="protein sequence ID" value="ENSBTAP00000005577.2"/>
    <property type="gene ID" value="ENSBTAG00000004259.6"/>
</dbReference>
<dbReference type="GeneID" id="513870"/>
<dbReference type="KEGG" id="bta:513870"/>
<dbReference type="CTD" id="3241"/>
<dbReference type="VEuPathDB" id="HostDB:ENSBTAG00000004259"/>
<dbReference type="VGNC" id="VGNC:29937">
    <property type="gene designation" value="HPCAL1"/>
</dbReference>
<dbReference type="eggNOG" id="KOG0044">
    <property type="taxonomic scope" value="Eukaryota"/>
</dbReference>
<dbReference type="GeneTree" id="ENSGT00940000154645"/>
<dbReference type="HOGENOM" id="CLU_072366_1_0_1"/>
<dbReference type="InParanoid" id="P29105"/>
<dbReference type="OMA" id="RQHTEFN"/>
<dbReference type="OrthoDB" id="191686at2759"/>
<dbReference type="TreeFam" id="TF300009"/>
<dbReference type="Proteomes" id="UP000009136">
    <property type="component" value="Chromosome 11"/>
</dbReference>
<dbReference type="Bgee" id="ENSBTAG00000004259">
    <property type="expression patterns" value="Expressed in temporal cortex and 103 other cell types or tissues"/>
</dbReference>
<dbReference type="GO" id="GO:0016020">
    <property type="term" value="C:membrane"/>
    <property type="evidence" value="ECO:0007669"/>
    <property type="project" value="UniProtKB-SubCell"/>
</dbReference>
<dbReference type="GO" id="GO:0005509">
    <property type="term" value="F:calcium ion binding"/>
    <property type="evidence" value="ECO:0000318"/>
    <property type="project" value="GO_Central"/>
</dbReference>
<dbReference type="GO" id="GO:0009966">
    <property type="term" value="P:regulation of signal transduction"/>
    <property type="evidence" value="ECO:0000318"/>
    <property type="project" value="GO_Central"/>
</dbReference>
<dbReference type="CDD" id="cd00051">
    <property type="entry name" value="EFh"/>
    <property type="match status" value="2"/>
</dbReference>
<dbReference type="FunFam" id="1.10.238.10:FF:000078">
    <property type="entry name" value="Hippocalcin-like 1"/>
    <property type="match status" value="1"/>
</dbReference>
<dbReference type="FunFam" id="1.10.238.10:FF:000072">
    <property type="entry name" value="Hippocalcin-like protein 1"/>
    <property type="match status" value="1"/>
</dbReference>
<dbReference type="Gene3D" id="1.10.238.10">
    <property type="entry name" value="EF-hand"/>
    <property type="match status" value="2"/>
</dbReference>
<dbReference type="InterPro" id="IPR011992">
    <property type="entry name" value="EF-hand-dom_pair"/>
</dbReference>
<dbReference type="InterPro" id="IPR018247">
    <property type="entry name" value="EF_Hand_1_Ca_BS"/>
</dbReference>
<dbReference type="InterPro" id="IPR002048">
    <property type="entry name" value="EF_hand_dom"/>
</dbReference>
<dbReference type="InterPro" id="IPR028846">
    <property type="entry name" value="Recoverin"/>
</dbReference>
<dbReference type="PANTHER" id="PTHR23055">
    <property type="entry name" value="CALCIUM BINDING PROTEINS"/>
    <property type="match status" value="1"/>
</dbReference>
<dbReference type="PANTHER" id="PTHR23055:SF79">
    <property type="entry name" value="HIPPOCALCIN-LIKE PROTEIN 1"/>
    <property type="match status" value="1"/>
</dbReference>
<dbReference type="Pfam" id="PF13499">
    <property type="entry name" value="EF-hand_7"/>
    <property type="match status" value="2"/>
</dbReference>
<dbReference type="PRINTS" id="PR00450">
    <property type="entry name" value="RECOVERIN"/>
</dbReference>
<dbReference type="SMART" id="SM00054">
    <property type="entry name" value="EFh"/>
    <property type="match status" value="3"/>
</dbReference>
<dbReference type="SUPFAM" id="SSF47473">
    <property type="entry name" value="EF-hand"/>
    <property type="match status" value="1"/>
</dbReference>
<dbReference type="PROSITE" id="PS00018">
    <property type="entry name" value="EF_HAND_1"/>
    <property type="match status" value="3"/>
</dbReference>
<dbReference type="PROSITE" id="PS50222">
    <property type="entry name" value="EF_HAND_2"/>
    <property type="match status" value="4"/>
</dbReference>